<dbReference type="EMBL" id="CP000667">
    <property type="protein sequence ID" value="ABP56347.1"/>
    <property type="molecule type" value="Genomic_DNA"/>
</dbReference>
<dbReference type="RefSeq" id="WP_012015119.1">
    <property type="nucleotide sequence ID" value="NC_009380.1"/>
</dbReference>
<dbReference type="SMR" id="A4XBP0"/>
<dbReference type="STRING" id="369723.Strop_3917"/>
<dbReference type="KEGG" id="stp:Strop_3917"/>
<dbReference type="PATRIC" id="fig|369723.5.peg.4043"/>
<dbReference type="eggNOG" id="COG0092">
    <property type="taxonomic scope" value="Bacteria"/>
</dbReference>
<dbReference type="HOGENOM" id="CLU_058591_0_0_11"/>
<dbReference type="Proteomes" id="UP000000235">
    <property type="component" value="Chromosome"/>
</dbReference>
<dbReference type="GO" id="GO:0022627">
    <property type="term" value="C:cytosolic small ribosomal subunit"/>
    <property type="evidence" value="ECO:0007669"/>
    <property type="project" value="TreeGrafter"/>
</dbReference>
<dbReference type="GO" id="GO:0003729">
    <property type="term" value="F:mRNA binding"/>
    <property type="evidence" value="ECO:0007669"/>
    <property type="project" value="UniProtKB-UniRule"/>
</dbReference>
<dbReference type="GO" id="GO:0019843">
    <property type="term" value="F:rRNA binding"/>
    <property type="evidence" value="ECO:0007669"/>
    <property type="project" value="UniProtKB-UniRule"/>
</dbReference>
<dbReference type="GO" id="GO:0003735">
    <property type="term" value="F:structural constituent of ribosome"/>
    <property type="evidence" value="ECO:0007669"/>
    <property type="project" value="InterPro"/>
</dbReference>
<dbReference type="GO" id="GO:0006412">
    <property type="term" value="P:translation"/>
    <property type="evidence" value="ECO:0007669"/>
    <property type="project" value="UniProtKB-UniRule"/>
</dbReference>
<dbReference type="CDD" id="cd02412">
    <property type="entry name" value="KH-II_30S_S3"/>
    <property type="match status" value="1"/>
</dbReference>
<dbReference type="FunFam" id="3.30.1140.32:FF:000002">
    <property type="entry name" value="30S ribosomal protein S3"/>
    <property type="match status" value="1"/>
</dbReference>
<dbReference type="FunFam" id="3.30.300.20:FF:000001">
    <property type="entry name" value="30S ribosomal protein S3"/>
    <property type="match status" value="1"/>
</dbReference>
<dbReference type="Gene3D" id="3.30.300.20">
    <property type="match status" value="1"/>
</dbReference>
<dbReference type="Gene3D" id="3.30.1140.32">
    <property type="entry name" value="Ribosomal protein S3, C-terminal domain"/>
    <property type="match status" value="1"/>
</dbReference>
<dbReference type="HAMAP" id="MF_01309_B">
    <property type="entry name" value="Ribosomal_uS3_B"/>
    <property type="match status" value="1"/>
</dbReference>
<dbReference type="InterPro" id="IPR004087">
    <property type="entry name" value="KH_dom"/>
</dbReference>
<dbReference type="InterPro" id="IPR015946">
    <property type="entry name" value="KH_dom-like_a/b"/>
</dbReference>
<dbReference type="InterPro" id="IPR004044">
    <property type="entry name" value="KH_dom_type_2"/>
</dbReference>
<dbReference type="InterPro" id="IPR009019">
    <property type="entry name" value="KH_sf_prok-type"/>
</dbReference>
<dbReference type="InterPro" id="IPR036419">
    <property type="entry name" value="Ribosomal_S3_C_sf"/>
</dbReference>
<dbReference type="InterPro" id="IPR005704">
    <property type="entry name" value="Ribosomal_uS3_bac-typ"/>
</dbReference>
<dbReference type="InterPro" id="IPR001351">
    <property type="entry name" value="Ribosomal_uS3_C"/>
</dbReference>
<dbReference type="InterPro" id="IPR018280">
    <property type="entry name" value="Ribosomal_uS3_CS"/>
</dbReference>
<dbReference type="NCBIfam" id="TIGR01009">
    <property type="entry name" value="rpsC_bact"/>
    <property type="match status" value="1"/>
</dbReference>
<dbReference type="PANTHER" id="PTHR11760">
    <property type="entry name" value="30S/40S RIBOSOMAL PROTEIN S3"/>
    <property type="match status" value="1"/>
</dbReference>
<dbReference type="PANTHER" id="PTHR11760:SF19">
    <property type="entry name" value="SMALL RIBOSOMAL SUBUNIT PROTEIN US3C"/>
    <property type="match status" value="1"/>
</dbReference>
<dbReference type="Pfam" id="PF07650">
    <property type="entry name" value="KH_2"/>
    <property type="match status" value="1"/>
</dbReference>
<dbReference type="Pfam" id="PF00189">
    <property type="entry name" value="Ribosomal_S3_C"/>
    <property type="match status" value="1"/>
</dbReference>
<dbReference type="SMART" id="SM00322">
    <property type="entry name" value="KH"/>
    <property type="match status" value="1"/>
</dbReference>
<dbReference type="SUPFAM" id="SSF54814">
    <property type="entry name" value="Prokaryotic type KH domain (KH-domain type II)"/>
    <property type="match status" value="1"/>
</dbReference>
<dbReference type="SUPFAM" id="SSF54821">
    <property type="entry name" value="Ribosomal protein S3 C-terminal domain"/>
    <property type="match status" value="1"/>
</dbReference>
<dbReference type="PROSITE" id="PS50823">
    <property type="entry name" value="KH_TYPE_2"/>
    <property type="match status" value="1"/>
</dbReference>
<dbReference type="PROSITE" id="PS00548">
    <property type="entry name" value="RIBOSOMAL_S3"/>
    <property type="match status" value="1"/>
</dbReference>
<reference key="1">
    <citation type="journal article" date="2007" name="Proc. Natl. Acad. Sci. U.S.A.">
        <title>Genome sequencing reveals complex secondary metabolome in the marine actinomycete Salinispora tropica.</title>
        <authorList>
            <person name="Udwary D.W."/>
            <person name="Zeigler L."/>
            <person name="Asolkar R.N."/>
            <person name="Singan V."/>
            <person name="Lapidus A."/>
            <person name="Fenical W."/>
            <person name="Jensen P.R."/>
            <person name="Moore B.S."/>
        </authorList>
    </citation>
    <scope>NUCLEOTIDE SEQUENCE [LARGE SCALE GENOMIC DNA]</scope>
    <source>
        <strain>ATCC BAA-916 / DSM 44818 / JCM 13857 / NBRC 105044 / CNB-440</strain>
    </source>
</reference>
<feature type="chain" id="PRO_1000086156" description="Small ribosomal subunit protein uS3">
    <location>
        <begin position="1"/>
        <end position="288"/>
    </location>
</feature>
<feature type="domain" description="KH type-2" evidence="1">
    <location>
        <begin position="38"/>
        <end position="106"/>
    </location>
</feature>
<feature type="region of interest" description="Disordered" evidence="2">
    <location>
        <begin position="209"/>
        <end position="288"/>
    </location>
</feature>
<feature type="compositionally biased region" description="Basic and acidic residues" evidence="2">
    <location>
        <begin position="219"/>
        <end position="232"/>
    </location>
</feature>
<feature type="compositionally biased region" description="Low complexity" evidence="2">
    <location>
        <begin position="249"/>
        <end position="264"/>
    </location>
</feature>
<feature type="compositionally biased region" description="Polar residues" evidence="2">
    <location>
        <begin position="277"/>
        <end position="288"/>
    </location>
</feature>
<gene>
    <name evidence="1" type="primary">rpsC</name>
    <name type="ordered locus">Strop_3917</name>
</gene>
<organism>
    <name type="scientific">Salinispora tropica (strain ATCC BAA-916 / DSM 44818 / JCM 13857 / NBRC 105044 / CNB-440)</name>
    <dbReference type="NCBI Taxonomy" id="369723"/>
    <lineage>
        <taxon>Bacteria</taxon>
        <taxon>Bacillati</taxon>
        <taxon>Actinomycetota</taxon>
        <taxon>Actinomycetes</taxon>
        <taxon>Micromonosporales</taxon>
        <taxon>Micromonosporaceae</taxon>
        <taxon>Salinispora</taxon>
    </lineage>
</organism>
<name>RS3_SALTO</name>
<keyword id="KW-1185">Reference proteome</keyword>
<keyword id="KW-0687">Ribonucleoprotein</keyword>
<keyword id="KW-0689">Ribosomal protein</keyword>
<keyword id="KW-0694">RNA-binding</keyword>
<keyword id="KW-0699">rRNA-binding</keyword>
<comment type="function">
    <text evidence="1">Binds the lower part of the 30S subunit head. Binds mRNA in the 70S ribosome, positioning it for translation.</text>
</comment>
<comment type="subunit">
    <text evidence="1">Part of the 30S ribosomal subunit. Forms a tight complex with proteins S10 and S14.</text>
</comment>
<comment type="similarity">
    <text evidence="1">Belongs to the universal ribosomal protein uS3 family.</text>
</comment>
<accession>A4XBP0</accession>
<proteinExistence type="inferred from homology"/>
<evidence type="ECO:0000255" key="1">
    <source>
        <dbReference type="HAMAP-Rule" id="MF_01309"/>
    </source>
</evidence>
<evidence type="ECO:0000256" key="2">
    <source>
        <dbReference type="SAM" id="MobiDB-lite"/>
    </source>
</evidence>
<evidence type="ECO:0000305" key="3"/>
<protein>
    <recommendedName>
        <fullName evidence="1">Small ribosomal subunit protein uS3</fullName>
    </recommendedName>
    <alternativeName>
        <fullName evidence="3">30S ribosomal protein S3</fullName>
    </alternativeName>
</protein>
<sequence length="288" mass="31575">MGQKVHPHGFRLGISTDWKSRWFADKLYKDYVGEDVKIRRMMSKGLERAGISKVDIERTRDRVRVDIHTARPGIVIGRKGAEADRIRGKLEKLTGKQVQLNIIEVKSPESDAQLVAQGVAEQLSSRVSFRRAMRKAMQSAMKNPVCKGIRVQVSGRLGGAEMSRTEFYREGRVPLHTLRANIEYGFFEARTTFGRIGVKVWIYKGDAVPGRETPAEAPSRPRRERGDRSERPRRGRSGSSGTTAGGTEAGRAAATTIAQAAETPSGESVDAGAVASAATQPAETQQEG</sequence>